<keyword id="KW-1015">Disulfide bond</keyword>
<keyword id="KW-0274">FAD</keyword>
<keyword id="KW-0285">Flavoprotein</keyword>
<keyword id="KW-1035">Host cytoplasm</keyword>
<keyword id="KW-0426">Late protein</keyword>
<keyword id="KW-0472">Membrane</keyword>
<keyword id="KW-0560">Oxidoreductase</keyword>
<keyword id="KW-0676">Redox-active center</keyword>
<keyword id="KW-1185">Reference proteome</keyword>
<keyword id="KW-0812">Transmembrane</keyword>
<keyword id="KW-1133">Transmembrane helix</keyword>
<keyword id="KW-0261">Viral envelope protein</keyword>
<keyword id="KW-0946">Virion</keyword>
<evidence type="ECO:0000250" key="1">
    <source>
        <dbReference type="UniProtKB" id="P23373"/>
    </source>
</evidence>
<evidence type="ECO:0000255" key="2"/>
<evidence type="ECO:0000255" key="3">
    <source>
        <dbReference type="PROSITE-ProRule" id="PRU00654"/>
    </source>
</evidence>
<evidence type="ECO:0000305" key="4"/>
<dbReference type="EC" id="1.8.3.2" evidence="1"/>
<dbReference type="EMBL" id="X69198">
    <property type="protein sequence ID" value="CAA48992.1"/>
    <property type="molecule type" value="Genomic_DNA"/>
</dbReference>
<dbReference type="PIR" id="D36842">
    <property type="entry name" value="D36842"/>
</dbReference>
<dbReference type="RefSeq" id="NP_042095.1">
    <property type="nucleotide sequence ID" value="NC_001611.1"/>
</dbReference>
<dbReference type="SMR" id="P0DOL5"/>
<dbReference type="GeneID" id="1486405"/>
<dbReference type="KEGG" id="vg:1486405"/>
<dbReference type="Proteomes" id="UP000002060">
    <property type="component" value="Segment"/>
</dbReference>
<dbReference type="GO" id="GO:0030430">
    <property type="term" value="C:host cell cytoplasm"/>
    <property type="evidence" value="ECO:0007669"/>
    <property type="project" value="UniProtKB-SubCell"/>
</dbReference>
<dbReference type="GO" id="GO:0016020">
    <property type="term" value="C:membrane"/>
    <property type="evidence" value="ECO:0007669"/>
    <property type="project" value="UniProtKB-KW"/>
</dbReference>
<dbReference type="GO" id="GO:0019031">
    <property type="term" value="C:viral envelope"/>
    <property type="evidence" value="ECO:0007669"/>
    <property type="project" value="UniProtKB-KW"/>
</dbReference>
<dbReference type="GO" id="GO:0055036">
    <property type="term" value="C:virion membrane"/>
    <property type="evidence" value="ECO:0007669"/>
    <property type="project" value="UniProtKB-SubCell"/>
</dbReference>
<dbReference type="GO" id="GO:0016972">
    <property type="term" value="F:thiol oxidase activity"/>
    <property type="evidence" value="ECO:0007669"/>
    <property type="project" value="UniProtKB-EC"/>
</dbReference>
<dbReference type="Gene3D" id="1.20.120.310">
    <property type="entry name" value="ERV/ALR sulfhydryl oxidase domain"/>
    <property type="match status" value="1"/>
</dbReference>
<dbReference type="InterPro" id="IPR036774">
    <property type="entry name" value="ERV/ALR_sulphydryl_oxid_sf"/>
</dbReference>
<dbReference type="InterPro" id="IPR017905">
    <property type="entry name" value="ERV/ALR_sulphydryl_oxidase"/>
</dbReference>
<dbReference type="InterPro" id="IPR006890">
    <property type="entry name" value="Sulphydryl_Oase_FAD-link_ERV1"/>
</dbReference>
<dbReference type="Pfam" id="PF04805">
    <property type="entry name" value="Pox_E10"/>
    <property type="match status" value="1"/>
</dbReference>
<dbReference type="PIRSF" id="PIRSF015696">
    <property type="entry name" value="VAC_E10R"/>
    <property type="match status" value="1"/>
</dbReference>
<dbReference type="SUPFAM" id="SSF69000">
    <property type="entry name" value="FAD-dependent thiol oxidase"/>
    <property type="match status" value="1"/>
</dbReference>
<dbReference type="PROSITE" id="PS51324">
    <property type="entry name" value="ERV_ALR"/>
    <property type="match status" value="1"/>
</dbReference>
<name>PG072_VAR67</name>
<organism>
    <name type="scientific">Variola virus (isolate Human/India/Ind3/1967)</name>
    <name type="common">VARV</name>
    <name type="synonym">Smallpox virus</name>
    <dbReference type="NCBI Taxonomy" id="587200"/>
    <lineage>
        <taxon>Viruses</taxon>
        <taxon>Varidnaviria</taxon>
        <taxon>Bamfordvirae</taxon>
        <taxon>Nucleocytoviricota</taxon>
        <taxon>Pokkesviricetes</taxon>
        <taxon>Chitovirales</taxon>
        <taxon>Poxviridae</taxon>
        <taxon>Chordopoxvirinae</taxon>
        <taxon>Orthopoxvirus</taxon>
        <taxon>Variola virus</taxon>
    </lineage>
</organism>
<accession>P0DOL5</accession>
<accession>P33821</accession>
<gene>
    <name type="primary">OPG072</name>
    <name type="ORF">E10R</name>
</gene>
<reference key="1">
    <citation type="journal article" date="1993" name="FEBS Lett.">
        <title>Genes of variola and vaccinia viruses necessary to overcome the host protective mechanisms.</title>
        <authorList>
            <person name="Shchelkunov S.N."/>
            <person name="Blinov V.M."/>
            <person name="Sandakhchiev L.S."/>
        </authorList>
    </citation>
    <scope>NUCLEOTIDE SEQUENCE [LARGE SCALE GENOMIC DNA]</scope>
</reference>
<organismHost>
    <name type="scientific">Homo sapiens</name>
    <name type="common">Human</name>
    <dbReference type="NCBI Taxonomy" id="9606"/>
</organismHost>
<comment type="function">
    <text evidence="1">FAD-dependent sulfhydryl oxidase that catalyzes disulfide bond formation. The complete pathway for formation of disulfide bonds in intracellular virion membrane proteins sequentially involves thiol-disulfide transfer between OPG072, OPG128 and OPG088.</text>
</comment>
<comment type="catalytic activity">
    <reaction evidence="1">
        <text>2 R'C(R)SH + O2 = R'C(R)S-S(R)CR' + H2O2</text>
        <dbReference type="Rhea" id="RHEA:17357"/>
        <dbReference type="ChEBI" id="CHEBI:15379"/>
        <dbReference type="ChEBI" id="CHEBI:16240"/>
        <dbReference type="ChEBI" id="CHEBI:16520"/>
        <dbReference type="ChEBI" id="CHEBI:17412"/>
        <dbReference type="EC" id="1.8.3.2"/>
    </reaction>
</comment>
<comment type="cofactor">
    <cofactor evidence="3">
        <name>FAD</name>
        <dbReference type="ChEBI" id="CHEBI:57692"/>
    </cofactor>
</comment>
<comment type="subunit">
    <text evidence="1">Interacts with OPG128; this interaction involves formation of a transient disulfide-bonded intermediate, allowing disulfide bond transfer.</text>
</comment>
<comment type="subcellular location">
    <subcellularLocation>
        <location evidence="1">Virion membrane</location>
    </subcellularLocation>
    <subcellularLocation>
        <location evidence="1">Host cytoplasm</location>
    </subcellularLocation>
    <text evidence="1">Associated with crescent membranes, immature virions (IV) and mature virions (MV).</text>
</comment>
<comment type="induction">
    <text evidence="1">Expressed in the early phase of the viral replicative cycle.</text>
</comment>
<comment type="similarity">
    <text evidence="4">Belongs to the orthopoxvirus OPG072 family.</text>
</comment>
<sequence>MNPKHWGRAAWTIIFIVLSQAGLDGNIEACKRKLYTIVSTLPCPACRRHATIAIEDNNIMSSNDLNYIYYFFIRLFNNLASDPKYAIDVSKVKPL</sequence>
<protein>
    <recommendedName>
        <fullName>Probable FAD-linked sulfhydryl oxidase OPG072</fullName>
        <ecNumber evidence="1">1.8.3.2</ecNumber>
    </recommendedName>
    <alternativeName>
        <fullName>Probable FAD-linked sulfhydryl oxidase E10</fullName>
        <ecNumber>1.8.3.2</ecNumber>
    </alternativeName>
</protein>
<feature type="chain" id="PRO_0000099466" description="Probable FAD-linked sulfhydryl oxidase OPG072">
    <location>
        <begin position="1"/>
        <end position="95"/>
    </location>
</feature>
<feature type="topological domain" description="Intravirion" evidence="2">
    <location>
        <begin position="1"/>
        <end position="8"/>
    </location>
</feature>
<feature type="transmembrane region" description="Helical" evidence="2">
    <location>
        <begin position="9"/>
        <end position="25"/>
    </location>
</feature>
<feature type="topological domain" description="Virion surface" evidence="2">
    <location>
        <begin position="26"/>
        <end position="95"/>
    </location>
</feature>
<feature type="domain" description="ERV/ALR sulfhydryl oxidase" evidence="3">
    <location>
        <begin position="1"/>
        <end position="95"/>
    </location>
</feature>
<feature type="disulfide bond" description="Redox-active" evidence="3">
    <location>
        <begin position="43"/>
        <end position="46"/>
    </location>
</feature>
<proteinExistence type="inferred from homology"/>